<proteinExistence type="inferred from homology"/>
<sequence length="384" mass="41773">MNKSDSFYNLETIGGILLFIAAVLAIIIANSPYRIGYDYFLSINGSVSVGNLSITKPLLLWINDGLMAIYFLLIGLEIKREVNRGILSDKTNLLVPALTALAGLLFPALIFIFFNAHHPVYLKGWAIPTATDIAFTLGIVSLLGSRVPFSLKILLTAIAIFDDIAAIVIIALFYTEQLSLLSLSLALVFTLILIGLNYFKCRRISVFMLFGVALWIAVLKSGVHATLAGIVIAMTIPDEGKESMLTRLEDGLHHWVVFLILPLFAFANAGVSFVGLDASMLTHPVVLGIGLGLFLGKQLGIFLSLGYFVQFKKFLKADKVNLAQVYGIALICGVGFTMSLFIGSLAYQNYDLSLMPMVKIGVVFGSFIAGLTGFLVLKMTSLKR</sequence>
<organism>
    <name type="scientific">Legionella pneumophila (strain Lens)</name>
    <dbReference type="NCBI Taxonomy" id="297245"/>
    <lineage>
        <taxon>Bacteria</taxon>
        <taxon>Pseudomonadati</taxon>
        <taxon>Pseudomonadota</taxon>
        <taxon>Gammaproteobacteria</taxon>
        <taxon>Legionellales</taxon>
        <taxon>Legionellaceae</taxon>
        <taxon>Legionella</taxon>
    </lineage>
</organism>
<feature type="chain" id="PRO_0000334330" description="Na(+)/H(+) antiporter NhaA">
    <location>
        <begin position="1"/>
        <end position="384"/>
    </location>
</feature>
<feature type="transmembrane region" description="Helical" evidence="1">
    <location>
        <begin position="9"/>
        <end position="29"/>
    </location>
</feature>
<feature type="transmembrane region" description="Helical" evidence="1">
    <location>
        <begin position="58"/>
        <end position="78"/>
    </location>
</feature>
<feature type="transmembrane region" description="Helical" evidence="1">
    <location>
        <begin position="94"/>
        <end position="114"/>
    </location>
</feature>
<feature type="transmembrane region" description="Helical" evidence="1">
    <location>
        <begin position="124"/>
        <end position="144"/>
    </location>
</feature>
<feature type="transmembrane region" description="Helical" evidence="1">
    <location>
        <begin position="153"/>
        <end position="173"/>
    </location>
</feature>
<feature type="transmembrane region" description="Helical" evidence="1">
    <location>
        <begin position="179"/>
        <end position="199"/>
    </location>
</feature>
<feature type="transmembrane region" description="Helical" evidence="1">
    <location>
        <begin position="204"/>
        <end position="224"/>
    </location>
</feature>
<feature type="transmembrane region" description="Helical" evidence="1">
    <location>
        <begin position="256"/>
        <end position="276"/>
    </location>
</feature>
<feature type="transmembrane region" description="Helical" evidence="1">
    <location>
        <begin position="285"/>
        <end position="305"/>
    </location>
</feature>
<feature type="transmembrane region" description="Helical" evidence="1">
    <location>
        <begin position="325"/>
        <end position="345"/>
    </location>
</feature>
<feature type="transmembrane region" description="Helical" evidence="1">
    <location>
        <begin position="357"/>
        <end position="377"/>
    </location>
</feature>
<gene>
    <name evidence="1" type="primary">nhaA</name>
    <name type="ordered locus">lpl2304</name>
</gene>
<keyword id="KW-0050">Antiport</keyword>
<keyword id="KW-0997">Cell inner membrane</keyword>
<keyword id="KW-1003">Cell membrane</keyword>
<keyword id="KW-0406">Ion transport</keyword>
<keyword id="KW-0472">Membrane</keyword>
<keyword id="KW-0915">Sodium</keyword>
<keyword id="KW-0739">Sodium transport</keyword>
<keyword id="KW-0812">Transmembrane</keyword>
<keyword id="KW-1133">Transmembrane helix</keyword>
<keyword id="KW-0813">Transport</keyword>
<protein>
    <recommendedName>
        <fullName evidence="1">Na(+)/H(+) antiporter NhaA</fullName>
    </recommendedName>
    <alternativeName>
        <fullName evidence="1">Sodium/proton antiporter NhaA</fullName>
    </alternativeName>
</protein>
<reference key="1">
    <citation type="journal article" date="2004" name="Nat. Genet.">
        <title>Evidence in the Legionella pneumophila genome for exploitation of host cell functions and high genome plasticity.</title>
        <authorList>
            <person name="Cazalet C."/>
            <person name="Rusniok C."/>
            <person name="Brueggemann H."/>
            <person name="Zidane N."/>
            <person name="Magnier A."/>
            <person name="Ma L."/>
            <person name="Tichit M."/>
            <person name="Jarraud S."/>
            <person name="Bouchier C."/>
            <person name="Vandenesch F."/>
            <person name="Kunst F."/>
            <person name="Etienne J."/>
            <person name="Glaser P."/>
            <person name="Buchrieser C."/>
        </authorList>
    </citation>
    <scope>NUCLEOTIDE SEQUENCE [LARGE SCALE GENOMIC DNA]</scope>
    <source>
        <strain>Lens</strain>
    </source>
</reference>
<evidence type="ECO:0000255" key="1">
    <source>
        <dbReference type="HAMAP-Rule" id="MF_01844"/>
    </source>
</evidence>
<dbReference type="EMBL" id="CR628337">
    <property type="protein sequence ID" value="CAH16544.1"/>
    <property type="molecule type" value="Genomic_DNA"/>
</dbReference>
<dbReference type="RefSeq" id="WP_011216270.1">
    <property type="nucleotide sequence ID" value="NC_006369.1"/>
</dbReference>
<dbReference type="SMR" id="Q5WU67"/>
<dbReference type="KEGG" id="lpf:lpl2304"/>
<dbReference type="LegioList" id="lpl2304"/>
<dbReference type="HOGENOM" id="CLU_015803_1_0_6"/>
<dbReference type="Proteomes" id="UP000002517">
    <property type="component" value="Chromosome"/>
</dbReference>
<dbReference type="GO" id="GO:0005886">
    <property type="term" value="C:plasma membrane"/>
    <property type="evidence" value="ECO:0007669"/>
    <property type="project" value="UniProtKB-SubCell"/>
</dbReference>
<dbReference type="GO" id="GO:0015385">
    <property type="term" value="F:sodium:proton antiporter activity"/>
    <property type="evidence" value="ECO:0007669"/>
    <property type="project" value="TreeGrafter"/>
</dbReference>
<dbReference type="GO" id="GO:0006885">
    <property type="term" value="P:regulation of pH"/>
    <property type="evidence" value="ECO:0007669"/>
    <property type="project" value="InterPro"/>
</dbReference>
<dbReference type="Gene3D" id="1.20.1530.10">
    <property type="entry name" value="Na+/H+ antiporter like domain"/>
    <property type="match status" value="1"/>
</dbReference>
<dbReference type="HAMAP" id="MF_01844">
    <property type="entry name" value="NhaA"/>
    <property type="match status" value="1"/>
</dbReference>
<dbReference type="InterPro" id="IPR023171">
    <property type="entry name" value="Na/H_antiporter_dom_sf"/>
</dbReference>
<dbReference type="InterPro" id="IPR004670">
    <property type="entry name" value="NhaA"/>
</dbReference>
<dbReference type="NCBIfam" id="TIGR00773">
    <property type="entry name" value="NhaA"/>
    <property type="match status" value="1"/>
</dbReference>
<dbReference type="NCBIfam" id="NF007111">
    <property type="entry name" value="PRK09560.1"/>
    <property type="match status" value="1"/>
</dbReference>
<dbReference type="NCBIfam" id="NF007112">
    <property type="entry name" value="PRK09561.1"/>
    <property type="match status" value="1"/>
</dbReference>
<dbReference type="NCBIfam" id="NF011427">
    <property type="entry name" value="PRK14854.1"/>
    <property type="match status" value="1"/>
</dbReference>
<dbReference type="PANTHER" id="PTHR30341:SF0">
    <property type="entry name" value="NA(+)_H(+) ANTIPORTER NHAA"/>
    <property type="match status" value="1"/>
</dbReference>
<dbReference type="PANTHER" id="PTHR30341">
    <property type="entry name" value="SODIUM ION/PROTON ANTIPORTER NHAA-RELATED"/>
    <property type="match status" value="1"/>
</dbReference>
<dbReference type="Pfam" id="PF06965">
    <property type="entry name" value="Na_H_antiport_1"/>
    <property type="match status" value="1"/>
</dbReference>
<comment type="function">
    <text evidence="1">Na(+)/H(+) antiporter that extrudes sodium in exchange for external protons.</text>
</comment>
<comment type="catalytic activity">
    <reaction evidence="1">
        <text>Na(+)(in) + 2 H(+)(out) = Na(+)(out) + 2 H(+)(in)</text>
        <dbReference type="Rhea" id="RHEA:29251"/>
        <dbReference type="ChEBI" id="CHEBI:15378"/>
        <dbReference type="ChEBI" id="CHEBI:29101"/>
    </reaction>
    <physiologicalReaction direction="left-to-right" evidence="1">
        <dbReference type="Rhea" id="RHEA:29252"/>
    </physiologicalReaction>
</comment>
<comment type="subcellular location">
    <subcellularLocation>
        <location evidence="1">Cell inner membrane</location>
        <topology evidence="1">Multi-pass membrane protein</topology>
    </subcellularLocation>
</comment>
<comment type="similarity">
    <text evidence="1">Belongs to the NhaA Na(+)/H(+) (TC 2.A.33) antiporter family.</text>
</comment>
<accession>Q5WU67</accession>
<name>NHAA_LEGPL</name>